<gene>
    <name evidence="3" type="primary">CSTLP1</name>
    <name evidence="6" type="ordered locus">Os06g0523400</name>
    <name evidence="4" type="ordered locus">LOC_Os06g33210</name>
    <name evidence="7" type="ORF">OsJ_21524</name>
    <name evidence="5" type="ORF">OSJNBa0009J19.27</name>
</gene>
<feature type="chain" id="PRO_0000434337" description="CMP-sialic acid transporter 1">
    <location>
        <begin position="1"/>
        <end position="322"/>
    </location>
</feature>
<feature type="topological domain" description="Cytoplasmic" evidence="4">
    <location>
        <begin position="1"/>
        <end position="2"/>
    </location>
</feature>
<feature type="transmembrane region" description="Helical" evidence="1">
    <location>
        <begin position="3"/>
        <end position="23"/>
    </location>
</feature>
<feature type="topological domain" description="Lumenal" evidence="4">
    <location>
        <begin position="24"/>
        <end position="33"/>
    </location>
</feature>
<feature type="transmembrane region" description="Helical" evidence="1">
    <location>
        <begin position="34"/>
        <end position="54"/>
    </location>
</feature>
<feature type="topological domain" description="Cytoplasmic" evidence="4">
    <location>
        <begin position="55"/>
        <end position="75"/>
    </location>
</feature>
<feature type="transmembrane region" description="Helical" evidence="1">
    <location>
        <begin position="76"/>
        <end position="96"/>
    </location>
</feature>
<feature type="topological domain" description="Lumenal" evidence="4">
    <location>
        <begin position="97"/>
        <end position="100"/>
    </location>
</feature>
<feature type="transmembrane region" description="Helical" evidence="1">
    <location>
        <begin position="101"/>
        <end position="120"/>
    </location>
</feature>
<feature type="topological domain" description="Cytoplasmic" evidence="4">
    <location>
        <begin position="121"/>
        <end position="126"/>
    </location>
</feature>
<feature type="transmembrane region" description="Helical" evidence="1">
    <location>
        <begin position="127"/>
        <end position="144"/>
    </location>
</feature>
<feature type="topological domain" description="Lumenal" evidence="4">
    <location>
        <begin position="145"/>
        <end position="157"/>
    </location>
</feature>
<feature type="transmembrane region" description="Helical" evidence="1">
    <location>
        <begin position="158"/>
        <end position="178"/>
    </location>
</feature>
<feature type="topological domain" description="Cytoplasmic" evidence="4">
    <location>
        <begin position="179"/>
        <end position="198"/>
    </location>
</feature>
<feature type="transmembrane region" description="Helical" evidence="1">
    <location>
        <begin position="199"/>
        <end position="219"/>
    </location>
</feature>
<feature type="topological domain" description="Lumenal" evidence="4">
    <location>
        <begin position="220"/>
        <end position="233"/>
    </location>
</feature>
<feature type="transmembrane region" description="Helical" evidence="1">
    <location>
        <begin position="234"/>
        <end position="254"/>
    </location>
</feature>
<feature type="topological domain" description="Cytoplasmic" evidence="4">
    <location>
        <begin position="255"/>
        <end position="262"/>
    </location>
</feature>
<feature type="transmembrane region" description="Helical" evidence="1">
    <location>
        <begin position="263"/>
        <end position="283"/>
    </location>
</feature>
<feature type="topological domain" description="Lumenal" evidence="4">
    <location>
        <begin position="284"/>
        <end position="286"/>
    </location>
</feature>
<feature type="sequence conflict" description="In Ref. 5; AK121890." evidence="4" ref="5">
    <original>M</original>
    <variation>I</variation>
    <location>
        <position position="164"/>
    </location>
</feature>
<feature type="sequence conflict" description="In Ref. 5; AK121890." evidence="4" ref="5">
    <original>L</original>
    <variation>I</variation>
    <location>
        <position position="291"/>
    </location>
</feature>
<feature type="sequence conflict" description="In Ref. 5; AK121890." evidence="4" ref="5">
    <original>L</original>
    <variation>Q</variation>
    <location>
        <position position="300"/>
    </location>
</feature>
<dbReference type="EMBL" id="AP004730">
    <property type="protein sequence ID" value="BAD45826.1"/>
    <property type="molecule type" value="Genomic_DNA"/>
</dbReference>
<dbReference type="EMBL" id="AP008212">
    <property type="protein sequence ID" value="BAF19667.1"/>
    <property type="molecule type" value="Genomic_DNA"/>
</dbReference>
<dbReference type="EMBL" id="AP014962">
    <property type="protein sequence ID" value="BAS98020.1"/>
    <property type="molecule type" value="Genomic_DNA"/>
</dbReference>
<dbReference type="EMBL" id="CM000143">
    <property type="protein sequence ID" value="EEE65803.1"/>
    <property type="molecule type" value="Genomic_DNA"/>
</dbReference>
<dbReference type="EMBL" id="AK121890">
    <property type="status" value="NOT_ANNOTATED_CDS"/>
    <property type="molecule type" value="mRNA"/>
</dbReference>
<dbReference type="RefSeq" id="XP_015641419.1">
    <property type="nucleotide sequence ID" value="XM_015785933.1"/>
</dbReference>
<dbReference type="SMR" id="Q654D9"/>
<dbReference type="FunCoup" id="Q654D9">
    <property type="interactions" value="2216"/>
</dbReference>
<dbReference type="STRING" id="39947.Q654D9"/>
<dbReference type="PaxDb" id="39947-Q654D9"/>
<dbReference type="EnsemblPlants" id="Os06t0523400-01">
    <property type="protein sequence ID" value="Os06t0523400-01"/>
    <property type="gene ID" value="Os06g0523400"/>
</dbReference>
<dbReference type="Gramene" id="Os06t0523400-01">
    <property type="protein sequence ID" value="Os06t0523400-01"/>
    <property type="gene ID" value="Os06g0523400"/>
</dbReference>
<dbReference type="KEGG" id="dosa:Os06g0523400"/>
<dbReference type="eggNOG" id="KOG2234">
    <property type="taxonomic scope" value="Eukaryota"/>
</dbReference>
<dbReference type="HOGENOM" id="CLU_024645_5_1_1"/>
<dbReference type="InParanoid" id="Q654D9"/>
<dbReference type="OMA" id="IEEDMMT"/>
<dbReference type="OrthoDB" id="408493at2759"/>
<dbReference type="Proteomes" id="UP000000763">
    <property type="component" value="Chromosome 6"/>
</dbReference>
<dbReference type="Proteomes" id="UP000007752">
    <property type="component" value="Chromosome 6"/>
</dbReference>
<dbReference type="Proteomes" id="UP000059680">
    <property type="component" value="Chromosome 6"/>
</dbReference>
<dbReference type="GO" id="GO:0000139">
    <property type="term" value="C:Golgi membrane"/>
    <property type="evidence" value="ECO:0000318"/>
    <property type="project" value="GO_Central"/>
</dbReference>
<dbReference type="GO" id="GO:0015165">
    <property type="term" value="F:pyrimidine nucleotide-sugar transmembrane transporter activity"/>
    <property type="evidence" value="ECO:0007669"/>
    <property type="project" value="InterPro"/>
</dbReference>
<dbReference type="GO" id="GO:0015136">
    <property type="term" value="F:sialic acid transmembrane transporter activity"/>
    <property type="evidence" value="ECO:0000314"/>
    <property type="project" value="UniProtKB"/>
</dbReference>
<dbReference type="GO" id="GO:0015739">
    <property type="term" value="P:sialic acid transport"/>
    <property type="evidence" value="ECO:0000314"/>
    <property type="project" value="UniProtKB"/>
</dbReference>
<dbReference type="GO" id="GO:0055085">
    <property type="term" value="P:transmembrane transport"/>
    <property type="evidence" value="ECO:0000318"/>
    <property type="project" value="GO_Central"/>
</dbReference>
<dbReference type="InterPro" id="IPR007271">
    <property type="entry name" value="Nuc_sug_transpt"/>
</dbReference>
<dbReference type="NCBIfam" id="TIGR00803">
    <property type="entry name" value="nst"/>
    <property type="match status" value="1"/>
</dbReference>
<dbReference type="PANTHER" id="PTHR10231">
    <property type="entry name" value="NUCLEOTIDE-SUGAR TRANSMEMBRANE TRANSPORTER"/>
    <property type="match status" value="1"/>
</dbReference>
<dbReference type="Pfam" id="PF04142">
    <property type="entry name" value="Nuc_sug_transp"/>
    <property type="match status" value="1"/>
</dbReference>
<dbReference type="PIRSF" id="PIRSF005799">
    <property type="entry name" value="UDP-gal_transpt"/>
    <property type="match status" value="1"/>
</dbReference>
<dbReference type="SUPFAM" id="SSF103481">
    <property type="entry name" value="Multidrug resistance efflux transporter EmrE"/>
    <property type="match status" value="1"/>
</dbReference>
<evidence type="ECO:0000255" key="1"/>
<evidence type="ECO:0000269" key="2">
    <source>
    </source>
</evidence>
<evidence type="ECO:0000303" key="3">
    <source>
    </source>
</evidence>
<evidence type="ECO:0000305" key="4"/>
<evidence type="ECO:0000312" key="5">
    <source>
        <dbReference type="EMBL" id="BAD45826.1"/>
    </source>
</evidence>
<evidence type="ECO:0000312" key="6">
    <source>
        <dbReference type="EMBL" id="BAF19667.1"/>
    </source>
</evidence>
<evidence type="ECO:0000312" key="7">
    <source>
        <dbReference type="EMBL" id="EEE65803.1"/>
    </source>
</evidence>
<accession>Q654D9</accession>
<accession>A0A0P0WXP8</accession>
<organism>
    <name type="scientific">Oryza sativa subsp. japonica</name>
    <name type="common">Rice</name>
    <dbReference type="NCBI Taxonomy" id="39947"/>
    <lineage>
        <taxon>Eukaryota</taxon>
        <taxon>Viridiplantae</taxon>
        <taxon>Streptophyta</taxon>
        <taxon>Embryophyta</taxon>
        <taxon>Tracheophyta</taxon>
        <taxon>Spermatophyta</taxon>
        <taxon>Magnoliopsida</taxon>
        <taxon>Liliopsida</taxon>
        <taxon>Poales</taxon>
        <taxon>Poaceae</taxon>
        <taxon>BOP clade</taxon>
        <taxon>Oryzoideae</taxon>
        <taxon>Oryzeae</taxon>
        <taxon>Oryzinae</taxon>
        <taxon>Oryza</taxon>
        <taxon>Oryza sativa</taxon>
    </lineage>
</organism>
<keyword id="KW-0333">Golgi apparatus</keyword>
<keyword id="KW-0472">Membrane</keyword>
<keyword id="KW-1185">Reference proteome</keyword>
<keyword id="KW-0762">Sugar transport</keyword>
<keyword id="KW-0812">Transmembrane</keyword>
<keyword id="KW-1133">Transmembrane helix</keyword>
<keyword id="KW-0813">Transport</keyword>
<protein>
    <recommendedName>
        <fullName evidence="4">CMP-sialic acid transporter 1</fullName>
        <shortName evidence="4">CMP-SA-Tr 1</shortName>
        <shortName evidence="4">CMP-Sia-Tr 1</shortName>
    </recommendedName>
    <alternativeName>
        <fullName evidence="3">CMP-sialic acid transporter-like protein 1</fullName>
        <shortName evidence="3">OsCSTLP1</shortName>
    </alternativeName>
</protein>
<sequence length="322" mass="36581">MQWYLVAALLTVLTSSQGILTTLSQSNGKYKYDYATIPFLAELFKLSFSSFFLWKECQSSSPPRMTKEWRSIRLYLVPSVIYLIHNNVQFATLTYVDPSTYQIMGNLKIVTTGILFRLVLKRKLSNLQWMAVVLLAVGTTTSQVKGCGDAPCDSLFSAPFQGYMLGILSACLSALAGVYTEYLMKKNNDSLYWQNVQLYTFGVIFNMGWLIYGDFKAGFERGPWWQRLFNGYSITTWMVVFNLGSTGLLVSWLMKYSDNIVKVYSTSMAMLLTMVLSVYLFNVRATLQLFLGIVICIISLQMYFMPVNMLVELPQALPVTSK</sequence>
<proteinExistence type="evidence at transcript level"/>
<reference key="1">
    <citation type="journal article" date="2005" name="Nature">
        <title>The map-based sequence of the rice genome.</title>
        <authorList>
            <consortium name="International rice genome sequencing project (IRGSP)"/>
        </authorList>
    </citation>
    <scope>NUCLEOTIDE SEQUENCE [LARGE SCALE GENOMIC DNA]</scope>
    <source>
        <strain>cv. Nipponbare</strain>
    </source>
</reference>
<reference key="2">
    <citation type="journal article" date="2008" name="Nucleic Acids Res.">
        <title>The rice annotation project database (RAP-DB): 2008 update.</title>
        <authorList>
            <consortium name="The rice annotation project (RAP)"/>
        </authorList>
    </citation>
    <scope>GENOME REANNOTATION</scope>
    <source>
        <strain>cv. Nipponbare</strain>
    </source>
</reference>
<reference key="3">
    <citation type="journal article" date="2013" name="Rice">
        <title>Improvement of the Oryza sativa Nipponbare reference genome using next generation sequence and optical map data.</title>
        <authorList>
            <person name="Kawahara Y."/>
            <person name="de la Bastide M."/>
            <person name="Hamilton J.P."/>
            <person name="Kanamori H."/>
            <person name="McCombie W.R."/>
            <person name="Ouyang S."/>
            <person name="Schwartz D.C."/>
            <person name="Tanaka T."/>
            <person name="Wu J."/>
            <person name="Zhou S."/>
            <person name="Childs K.L."/>
            <person name="Davidson R.M."/>
            <person name="Lin H."/>
            <person name="Quesada-Ocampo L."/>
            <person name="Vaillancourt B."/>
            <person name="Sakai H."/>
            <person name="Lee S.S."/>
            <person name="Kim J."/>
            <person name="Numa H."/>
            <person name="Itoh T."/>
            <person name="Buell C.R."/>
            <person name="Matsumoto T."/>
        </authorList>
    </citation>
    <scope>GENOME REANNOTATION</scope>
    <source>
        <strain>cv. Nipponbare</strain>
    </source>
</reference>
<reference key="4">
    <citation type="journal article" date="2005" name="PLoS Biol.">
        <title>The genomes of Oryza sativa: a history of duplications.</title>
        <authorList>
            <person name="Yu J."/>
            <person name="Wang J."/>
            <person name="Lin W."/>
            <person name="Li S."/>
            <person name="Li H."/>
            <person name="Zhou J."/>
            <person name="Ni P."/>
            <person name="Dong W."/>
            <person name="Hu S."/>
            <person name="Zeng C."/>
            <person name="Zhang J."/>
            <person name="Zhang Y."/>
            <person name="Li R."/>
            <person name="Xu Z."/>
            <person name="Li S."/>
            <person name="Li X."/>
            <person name="Zheng H."/>
            <person name="Cong L."/>
            <person name="Lin L."/>
            <person name="Yin J."/>
            <person name="Geng J."/>
            <person name="Li G."/>
            <person name="Shi J."/>
            <person name="Liu J."/>
            <person name="Lv H."/>
            <person name="Li J."/>
            <person name="Wang J."/>
            <person name="Deng Y."/>
            <person name="Ran L."/>
            <person name="Shi X."/>
            <person name="Wang X."/>
            <person name="Wu Q."/>
            <person name="Li C."/>
            <person name="Ren X."/>
            <person name="Wang J."/>
            <person name="Wang X."/>
            <person name="Li D."/>
            <person name="Liu D."/>
            <person name="Zhang X."/>
            <person name="Ji Z."/>
            <person name="Zhao W."/>
            <person name="Sun Y."/>
            <person name="Zhang Z."/>
            <person name="Bao J."/>
            <person name="Han Y."/>
            <person name="Dong L."/>
            <person name="Ji J."/>
            <person name="Chen P."/>
            <person name="Wu S."/>
            <person name="Liu J."/>
            <person name="Xiao Y."/>
            <person name="Bu D."/>
            <person name="Tan J."/>
            <person name="Yang L."/>
            <person name="Ye C."/>
            <person name="Zhang J."/>
            <person name="Xu J."/>
            <person name="Zhou Y."/>
            <person name="Yu Y."/>
            <person name="Zhang B."/>
            <person name="Zhuang S."/>
            <person name="Wei H."/>
            <person name="Liu B."/>
            <person name="Lei M."/>
            <person name="Yu H."/>
            <person name="Li Y."/>
            <person name="Xu H."/>
            <person name="Wei S."/>
            <person name="He X."/>
            <person name="Fang L."/>
            <person name="Zhang Z."/>
            <person name="Zhang Y."/>
            <person name="Huang X."/>
            <person name="Su Z."/>
            <person name="Tong W."/>
            <person name="Li J."/>
            <person name="Tong Z."/>
            <person name="Li S."/>
            <person name="Ye J."/>
            <person name="Wang L."/>
            <person name="Fang L."/>
            <person name="Lei T."/>
            <person name="Chen C.-S."/>
            <person name="Chen H.-C."/>
            <person name="Xu Z."/>
            <person name="Li H."/>
            <person name="Huang H."/>
            <person name="Zhang F."/>
            <person name="Xu H."/>
            <person name="Li N."/>
            <person name="Zhao C."/>
            <person name="Li S."/>
            <person name="Dong L."/>
            <person name="Huang Y."/>
            <person name="Li L."/>
            <person name="Xi Y."/>
            <person name="Qi Q."/>
            <person name="Li W."/>
            <person name="Zhang B."/>
            <person name="Hu W."/>
            <person name="Zhang Y."/>
            <person name="Tian X."/>
            <person name="Jiao Y."/>
            <person name="Liang X."/>
            <person name="Jin J."/>
            <person name="Gao L."/>
            <person name="Zheng W."/>
            <person name="Hao B."/>
            <person name="Liu S.-M."/>
            <person name="Wang W."/>
            <person name="Yuan L."/>
            <person name="Cao M."/>
            <person name="McDermott J."/>
            <person name="Samudrala R."/>
            <person name="Wang J."/>
            <person name="Wong G.K.-S."/>
            <person name="Yang H."/>
        </authorList>
    </citation>
    <scope>NUCLEOTIDE SEQUENCE [LARGE SCALE GENOMIC DNA]</scope>
    <source>
        <strain>cv. Nipponbare</strain>
    </source>
</reference>
<reference key="5">
    <citation type="journal article" date="2003" name="Science">
        <title>Collection, mapping, and annotation of over 28,000 cDNA clones from japonica rice.</title>
        <authorList>
            <consortium name="The rice full-length cDNA consortium"/>
        </authorList>
    </citation>
    <scope>NUCLEOTIDE SEQUENCE [LARGE SCALE MRNA]</scope>
    <source>
        <strain>cv. Nipponbare</strain>
    </source>
</reference>
<reference key="6">
    <citation type="journal article" date="2009" name="Phytochemistry">
        <title>Analysis of CMP-sialic acid transporter-like proteins in plants.</title>
        <authorList>
            <person name="Takashima S."/>
            <person name="Seino J."/>
            <person name="Nakano T."/>
            <person name="Fujiyama K."/>
            <person name="Tsujimoto M."/>
            <person name="Ishida N."/>
            <person name="Hashimoto Y."/>
        </authorList>
    </citation>
    <scope>FUNCTION</scope>
    <scope>TISSUE SPECIFICITY</scope>
</reference>
<comment type="function">
    <text evidence="2">Sugar transporter involved in the transport of CMP-sialic acid from the cytoplasm into the Golgi. May transport important nucleotide sugars such as CMP-Kdo (2-keto-3-deoxy-D-manno-octulosonic acid) in physiological conditions.</text>
</comment>
<comment type="subcellular location">
    <subcellularLocation>
        <location evidence="4">Golgi apparatus membrane</location>
        <topology evidence="4">Multi-pass membrane protein</topology>
    </subcellularLocation>
</comment>
<comment type="tissue specificity">
    <text evidence="2">Expressed in roots, leaves and stalks.</text>
</comment>
<comment type="similarity">
    <text evidence="4">Belongs to the nucleotide-sugar transporter family. CMP-Sialate:CMP antiporter (TC 2.A.7.12) subfamily.</text>
</comment>
<name>CSTR1_ORYSJ</name>